<proteinExistence type="evidence at transcript level"/>
<feature type="chain" id="PRO_0000249556" description="Kinetochore protein NDC80 homolog">
    <location>
        <begin position="1"/>
        <end position="640"/>
    </location>
</feature>
<feature type="region of interest" description="Disordered" evidence="5">
    <location>
        <begin position="1"/>
        <end position="79"/>
    </location>
</feature>
<feature type="coiled-coil region" evidence="4">
    <location>
        <begin position="249"/>
        <end position="394"/>
    </location>
</feature>
<feature type="coiled-coil region" evidence="4">
    <location>
        <begin position="467"/>
        <end position="636"/>
    </location>
</feature>
<feature type="compositionally biased region" description="Polar residues" evidence="5">
    <location>
        <begin position="1"/>
        <end position="11"/>
    </location>
</feature>
<feature type="compositionally biased region" description="Polar residues" evidence="5">
    <location>
        <begin position="61"/>
        <end position="70"/>
    </location>
</feature>
<dbReference type="EMBL" id="BC084918">
    <property type="protein sequence ID" value="AAH84918.1"/>
    <property type="molecule type" value="mRNA"/>
</dbReference>
<dbReference type="RefSeq" id="NP_001011162.1">
    <property type="nucleotide sequence ID" value="NM_001011162.1"/>
</dbReference>
<dbReference type="RefSeq" id="XP_012809877.1">
    <property type="nucleotide sequence ID" value="XM_012954423.3"/>
</dbReference>
<dbReference type="SMR" id="Q5U4X5"/>
<dbReference type="FunCoup" id="Q5U4X5">
    <property type="interactions" value="1093"/>
</dbReference>
<dbReference type="STRING" id="8364.ENSXETP00000003319"/>
<dbReference type="PaxDb" id="8364-ENSXETP00000045005"/>
<dbReference type="DNASU" id="496580"/>
<dbReference type="GeneID" id="496580"/>
<dbReference type="KEGG" id="xtr:496580"/>
<dbReference type="AGR" id="Xenbase:XB-GENE-997352"/>
<dbReference type="CTD" id="10403"/>
<dbReference type="Xenbase" id="XB-GENE-997352">
    <property type="gene designation" value="ndc80"/>
</dbReference>
<dbReference type="eggNOG" id="KOG0995">
    <property type="taxonomic scope" value="Eukaryota"/>
</dbReference>
<dbReference type="InParanoid" id="Q5U4X5"/>
<dbReference type="OMA" id="PSHKFQK"/>
<dbReference type="OrthoDB" id="7459479at2759"/>
<dbReference type="Reactome" id="R-XTR-141444">
    <property type="pathway name" value="Amplification of signal from unattached kinetochores via a MAD2 inhibitory signal"/>
</dbReference>
<dbReference type="Reactome" id="R-XTR-2467813">
    <property type="pathway name" value="Separation of Sister Chromatids"/>
</dbReference>
<dbReference type="Reactome" id="R-XTR-2500257">
    <property type="pathway name" value="Resolution of Sister Chromatid Cohesion"/>
</dbReference>
<dbReference type="Reactome" id="R-XTR-5663220">
    <property type="pathway name" value="RHO GTPases Activate Formins"/>
</dbReference>
<dbReference type="Reactome" id="R-XTR-68877">
    <property type="pathway name" value="Mitotic Prometaphase"/>
</dbReference>
<dbReference type="Reactome" id="R-XTR-9648025">
    <property type="pathway name" value="EML4 and NUDC in mitotic spindle formation"/>
</dbReference>
<dbReference type="Proteomes" id="UP000008143">
    <property type="component" value="Chromosome 2"/>
</dbReference>
<dbReference type="Bgee" id="ENSXETG00000020840">
    <property type="expression patterns" value="Expressed in 2-cell stage embryo and 15 other cell types or tissues"/>
</dbReference>
<dbReference type="ExpressionAtlas" id="Q5U4X5">
    <property type="expression patterns" value="baseline"/>
</dbReference>
<dbReference type="GO" id="GO:0000776">
    <property type="term" value="C:kinetochore"/>
    <property type="evidence" value="ECO:0000250"/>
    <property type="project" value="UniProtKB"/>
</dbReference>
<dbReference type="GO" id="GO:0031262">
    <property type="term" value="C:Ndc80 complex"/>
    <property type="evidence" value="ECO:0000250"/>
    <property type="project" value="UniProtKB"/>
</dbReference>
<dbReference type="GO" id="GO:0005634">
    <property type="term" value="C:nucleus"/>
    <property type="evidence" value="ECO:0007669"/>
    <property type="project" value="UniProtKB-SubCell"/>
</dbReference>
<dbReference type="GO" id="GO:0140483">
    <property type="term" value="F:kinetochore adaptor activity"/>
    <property type="evidence" value="ECO:0000250"/>
    <property type="project" value="UniProtKB"/>
</dbReference>
<dbReference type="GO" id="GO:0008017">
    <property type="term" value="F:microtubule binding"/>
    <property type="evidence" value="ECO:0000250"/>
    <property type="project" value="UniProtKB"/>
</dbReference>
<dbReference type="GO" id="GO:0051315">
    <property type="term" value="P:attachment of mitotic spindle microtubules to kinetochore"/>
    <property type="evidence" value="ECO:0000250"/>
    <property type="project" value="UniProtKB"/>
</dbReference>
<dbReference type="GO" id="GO:0051301">
    <property type="term" value="P:cell division"/>
    <property type="evidence" value="ECO:0007669"/>
    <property type="project" value="UniProtKB-KW"/>
</dbReference>
<dbReference type="GO" id="GO:0007059">
    <property type="term" value="P:chromosome segregation"/>
    <property type="evidence" value="ECO:0000250"/>
    <property type="project" value="UniProtKB"/>
</dbReference>
<dbReference type="GO" id="GO:0051310">
    <property type="term" value="P:metaphase chromosome alignment"/>
    <property type="evidence" value="ECO:0000250"/>
    <property type="project" value="UniProtKB"/>
</dbReference>
<dbReference type="GO" id="GO:0007052">
    <property type="term" value="P:mitotic spindle organization"/>
    <property type="evidence" value="ECO:0000250"/>
    <property type="project" value="UniProtKB"/>
</dbReference>
<dbReference type="GO" id="GO:0090267">
    <property type="term" value="P:positive regulation of mitotic cell cycle spindle assembly checkpoint"/>
    <property type="evidence" value="ECO:0000250"/>
    <property type="project" value="UniProtKB"/>
</dbReference>
<dbReference type="FunFam" id="1.10.418.30:FF:000002">
    <property type="entry name" value="NDC80, kinetochore complex component"/>
    <property type="match status" value="1"/>
</dbReference>
<dbReference type="Gene3D" id="6.10.250.1950">
    <property type="match status" value="1"/>
</dbReference>
<dbReference type="Gene3D" id="1.10.418.30">
    <property type="entry name" value="Ncd80 complex, Ncd80 subunit"/>
    <property type="match status" value="1"/>
</dbReference>
<dbReference type="InterPro" id="IPR040967">
    <property type="entry name" value="DUF5595"/>
</dbReference>
<dbReference type="InterPro" id="IPR005550">
    <property type="entry name" value="Kinetochore_Ndc80"/>
</dbReference>
<dbReference type="InterPro" id="IPR055260">
    <property type="entry name" value="Ndc80_CH"/>
</dbReference>
<dbReference type="InterPro" id="IPR038273">
    <property type="entry name" value="Ndc80_sf"/>
</dbReference>
<dbReference type="PANTHER" id="PTHR10643">
    <property type="entry name" value="KINETOCHORE PROTEIN NDC80"/>
    <property type="match status" value="1"/>
</dbReference>
<dbReference type="PANTHER" id="PTHR10643:SF2">
    <property type="entry name" value="KINETOCHORE PROTEIN NDC80 HOMOLOG"/>
    <property type="match status" value="1"/>
</dbReference>
<dbReference type="Pfam" id="PF18077">
    <property type="entry name" value="DUF5595"/>
    <property type="match status" value="1"/>
</dbReference>
<dbReference type="Pfam" id="PF03801">
    <property type="entry name" value="Ndc80_HEC"/>
    <property type="match status" value="1"/>
</dbReference>
<dbReference type="Pfam" id="PF24487">
    <property type="entry name" value="NDC80_loop"/>
    <property type="match status" value="1"/>
</dbReference>
<evidence type="ECO:0000250" key="1"/>
<evidence type="ECO:0000250" key="2">
    <source>
        <dbReference type="UniProtKB" id="O14777"/>
    </source>
</evidence>
<evidence type="ECO:0000250" key="3">
    <source>
        <dbReference type="UniProtKB" id="Q8AWF5"/>
    </source>
</evidence>
<evidence type="ECO:0000255" key="4"/>
<evidence type="ECO:0000256" key="5">
    <source>
        <dbReference type="SAM" id="MobiDB-lite"/>
    </source>
</evidence>
<evidence type="ECO:0000305" key="6"/>
<comment type="function">
    <text evidence="2 3">Acts as a component of the essential kinetochore-associated NDC80 complex, which is required for chromosome segregation and spindle checkpoint activity. Required for kinetochore integrity and the organization of stable microtubule binding sites in the outer plate of the kinetochore. The NDC80 complex synergistically enhances the affinity of the SKA1 complex for microtubules and may allow the NDC80 complex to track depolymerizing microtubules. May play a role in chromosome congression and may be essential for the end-on attachment of the kinetochores to spindle microtubules.</text>
</comment>
<comment type="subunit">
    <text evidence="1">Component of the NDC80 complex, which is composed of ndc80, cdca1, spbc24 and spbc25. The NDC80 complex interacts with mis12 and zwint. Interacts with cep57r (By similarity).</text>
</comment>
<comment type="subcellular location">
    <subcellularLocation>
        <location evidence="3">Nucleus</location>
    </subcellularLocation>
    <subcellularLocation>
        <location evidence="3">Chromosome</location>
        <location evidence="3">Centromere</location>
        <location evidence="3">Kinetochore</location>
    </subcellularLocation>
    <text evidence="3">Localizes to kinetochores from late prophase to anaphase.</text>
</comment>
<comment type="similarity">
    <text evidence="6">Belongs to the NDC80/HEC1 family.</text>
</comment>
<gene>
    <name type="primary">ndc80</name>
    <name type="synonym">kntc2</name>
</gene>
<reference key="1">
    <citation type="submission" date="2004-10" db="EMBL/GenBank/DDBJ databases">
        <authorList>
            <consortium name="NIH - Xenopus Gene Collection (XGC) project"/>
        </authorList>
    </citation>
    <scope>NUCLEOTIDE SEQUENCE [LARGE SCALE MRNA]</scope>
    <source>
        <tissue>Embryo</tissue>
    </source>
</reference>
<accession>Q5U4X5</accession>
<organism>
    <name type="scientific">Xenopus tropicalis</name>
    <name type="common">Western clawed frog</name>
    <name type="synonym">Silurana tropicalis</name>
    <dbReference type="NCBI Taxonomy" id="8364"/>
    <lineage>
        <taxon>Eukaryota</taxon>
        <taxon>Metazoa</taxon>
        <taxon>Chordata</taxon>
        <taxon>Craniata</taxon>
        <taxon>Vertebrata</taxon>
        <taxon>Euteleostomi</taxon>
        <taxon>Amphibia</taxon>
        <taxon>Batrachia</taxon>
        <taxon>Anura</taxon>
        <taxon>Pipoidea</taxon>
        <taxon>Pipidae</taxon>
        <taxon>Xenopodinae</taxon>
        <taxon>Xenopus</taxon>
        <taxon>Silurana</taxon>
    </lineage>
</organism>
<sequence>MRRSSVTNRQSLLPLRVQDANRMGLTTPQSKDRQGFGKLSMSKPHSGTSERKTSFFGKRMSNGTARTSQYGAFGGTEKIKDPRPLHDKAFIQQCIRQLCEFLNENGYSQTLTVKSLQGPSTKDFLKIFAFIYTFICPNYENPESKFEEEIPRIFKELGYPFALSKSSMYTVGAPHTWPQIVAALVWLIDCVKLCCVLRSENPVFEEPQMGEQSENGIDFNQLFLDYTVRCYDQFMEGRDTFEEYDADMCIRLKEAYHVDESNLEALQQESRRLLEEIERLEKEKENEPDRLASMRKLKVSLQADIQKYQNYLTEIESHSTLLEQRVSSVSEDLEATELESRAVQQENLRLKNILDNQKYSVADIERIKYEENELQQTIAKLTKDLDEDKQQLWSEELKYAKMKESVETQLSEFHKIGRKVRLIPPTAEYANGYDFQIQCNLDSEQSSLIHYRNKINVPLVEILSQSEGQIAGATNKKMGVEDMVEQLNTLIGEKKNEVKVQKDEAQKLEETYQQKVEEAEEDEKRWISEIESLEKHRQLLESGVNKSLDEALKDLQKEQQELQLVEHQTEEEMRQVENKLVRVVHAVANHVAVIEKHLEEKRLKVEREYEEFMKEDLLLDLRELLDKYKEKARVLDSPPY</sequence>
<protein>
    <recommendedName>
        <fullName>Kinetochore protein NDC80 homolog</fullName>
    </recommendedName>
    <alternativeName>
        <fullName>Kinetochore protein Hec1</fullName>
    </alternativeName>
    <alternativeName>
        <fullName>Kinetochore-associated protein 2</fullName>
    </alternativeName>
</protein>
<keyword id="KW-0131">Cell cycle</keyword>
<keyword id="KW-0132">Cell division</keyword>
<keyword id="KW-0137">Centromere</keyword>
<keyword id="KW-0158">Chromosome</keyword>
<keyword id="KW-0175">Coiled coil</keyword>
<keyword id="KW-0995">Kinetochore</keyword>
<keyword id="KW-0498">Mitosis</keyword>
<keyword id="KW-0539">Nucleus</keyword>
<keyword id="KW-1185">Reference proteome</keyword>
<name>NDC80_XENTR</name>